<evidence type="ECO:0000255" key="1">
    <source>
        <dbReference type="HAMAP-Rule" id="MF_00015"/>
    </source>
</evidence>
<evidence type="ECO:0000256" key="2">
    <source>
        <dbReference type="SAM" id="MobiDB-lite"/>
    </source>
</evidence>
<gene>
    <name evidence="1" type="primary">lexA</name>
    <name type="ordered locus">Meso_1642</name>
</gene>
<proteinExistence type="inferred from homology"/>
<reference key="1">
    <citation type="submission" date="2006-06" db="EMBL/GenBank/DDBJ databases">
        <title>Complete sequence of chromosome of Mesorhizobium sp. BNC1.</title>
        <authorList>
            <consortium name="US DOE Joint Genome Institute"/>
            <person name="Copeland A."/>
            <person name="Lucas S."/>
            <person name="Lapidus A."/>
            <person name="Barry K."/>
            <person name="Detter J.C."/>
            <person name="Glavina del Rio T."/>
            <person name="Hammon N."/>
            <person name="Israni S."/>
            <person name="Dalin E."/>
            <person name="Tice H."/>
            <person name="Pitluck S."/>
            <person name="Chertkov O."/>
            <person name="Brettin T."/>
            <person name="Bruce D."/>
            <person name="Han C."/>
            <person name="Tapia R."/>
            <person name="Gilna P."/>
            <person name="Schmutz J."/>
            <person name="Larimer F."/>
            <person name="Land M."/>
            <person name="Hauser L."/>
            <person name="Kyrpides N."/>
            <person name="Mikhailova N."/>
            <person name="Richardson P."/>
        </authorList>
    </citation>
    <scope>NUCLEOTIDE SEQUENCE [LARGE SCALE GENOMIC DNA]</scope>
    <source>
        <strain>BNC1</strain>
    </source>
</reference>
<comment type="function">
    <text evidence="1">Represses a number of genes involved in the response to DNA damage (SOS response), including recA and lexA. In the presence of single-stranded DNA, RecA interacts with LexA causing an autocatalytic cleavage which disrupts the DNA-binding part of LexA, leading to derepression of the SOS regulon and eventually DNA repair.</text>
</comment>
<comment type="catalytic activity">
    <reaction evidence="1">
        <text>Hydrolysis of Ala-|-Gly bond in repressor LexA.</text>
        <dbReference type="EC" id="3.4.21.88"/>
    </reaction>
</comment>
<comment type="subunit">
    <text evidence="1">Homodimer.</text>
</comment>
<comment type="similarity">
    <text evidence="1">Belongs to the peptidase S24 family.</text>
</comment>
<feature type="chain" id="PRO_1000001303" description="LexA repressor">
    <location>
        <begin position="1"/>
        <end position="236"/>
    </location>
</feature>
<feature type="DNA-binding region" description="H-T-H motif" evidence="1">
    <location>
        <begin position="26"/>
        <end position="46"/>
    </location>
</feature>
<feature type="region of interest" description="Disordered" evidence="2">
    <location>
        <begin position="84"/>
        <end position="107"/>
    </location>
</feature>
<feature type="active site" description="For autocatalytic cleavage activity" evidence="1">
    <location>
        <position position="157"/>
    </location>
</feature>
<feature type="active site" description="For autocatalytic cleavage activity" evidence="1">
    <location>
        <position position="195"/>
    </location>
</feature>
<feature type="site" description="Cleavage; by autolysis" evidence="1">
    <location>
        <begin position="122"/>
        <end position="123"/>
    </location>
</feature>
<sequence>MLTRKQHELLLFIHARLKETGIPPSFDEMKEALDLASKSGIHRLITALEERGFIRRLPNRARALEVLRLPDSIAPGLAAPRKFSPSVIEGGQGRSSPAPRPAANNDDETSVVSIPVMGRIAAGVPIDAIQHRTHSIGVPPDMITGGEHYALEVKGDSMIEAGIFDGDTVIIRQTQAANPGDIVVALVDEEEATLKRFRRKGASIALEAANPAYETRIFGPDRVKVQGRLVGLIRRY</sequence>
<keyword id="KW-0068">Autocatalytic cleavage</keyword>
<keyword id="KW-0227">DNA damage</keyword>
<keyword id="KW-0234">DNA repair</keyword>
<keyword id="KW-0235">DNA replication</keyword>
<keyword id="KW-0238">DNA-binding</keyword>
<keyword id="KW-0378">Hydrolase</keyword>
<keyword id="KW-0678">Repressor</keyword>
<keyword id="KW-0742">SOS response</keyword>
<keyword id="KW-0804">Transcription</keyword>
<keyword id="KW-0805">Transcription regulation</keyword>
<name>LEXA_CHESB</name>
<protein>
    <recommendedName>
        <fullName evidence="1">LexA repressor</fullName>
        <ecNumber evidence="1">3.4.21.88</ecNumber>
    </recommendedName>
</protein>
<organism>
    <name type="scientific">Chelativorans sp. (strain BNC1)</name>
    <dbReference type="NCBI Taxonomy" id="266779"/>
    <lineage>
        <taxon>Bacteria</taxon>
        <taxon>Pseudomonadati</taxon>
        <taxon>Pseudomonadota</taxon>
        <taxon>Alphaproteobacteria</taxon>
        <taxon>Hyphomicrobiales</taxon>
        <taxon>Phyllobacteriaceae</taxon>
        <taxon>Chelativorans</taxon>
    </lineage>
</organism>
<dbReference type="EC" id="3.4.21.88" evidence="1"/>
<dbReference type="EMBL" id="CP000390">
    <property type="protein sequence ID" value="ABG63037.1"/>
    <property type="molecule type" value="Genomic_DNA"/>
</dbReference>
<dbReference type="SMR" id="Q11HT8"/>
<dbReference type="STRING" id="266779.Meso_1642"/>
<dbReference type="MEROPS" id="S24.001"/>
<dbReference type="KEGG" id="mes:Meso_1642"/>
<dbReference type="eggNOG" id="COG1974">
    <property type="taxonomic scope" value="Bacteria"/>
</dbReference>
<dbReference type="HOGENOM" id="CLU_066192_45_2_5"/>
<dbReference type="OrthoDB" id="9802364at2"/>
<dbReference type="GO" id="GO:0003677">
    <property type="term" value="F:DNA binding"/>
    <property type="evidence" value="ECO:0007669"/>
    <property type="project" value="UniProtKB-UniRule"/>
</dbReference>
<dbReference type="GO" id="GO:0004252">
    <property type="term" value="F:serine-type endopeptidase activity"/>
    <property type="evidence" value="ECO:0007669"/>
    <property type="project" value="UniProtKB-UniRule"/>
</dbReference>
<dbReference type="GO" id="GO:0006281">
    <property type="term" value="P:DNA repair"/>
    <property type="evidence" value="ECO:0007669"/>
    <property type="project" value="UniProtKB-UniRule"/>
</dbReference>
<dbReference type="GO" id="GO:0006260">
    <property type="term" value="P:DNA replication"/>
    <property type="evidence" value="ECO:0007669"/>
    <property type="project" value="UniProtKB-UniRule"/>
</dbReference>
<dbReference type="GO" id="GO:0045892">
    <property type="term" value="P:negative regulation of DNA-templated transcription"/>
    <property type="evidence" value="ECO:0007669"/>
    <property type="project" value="UniProtKB-UniRule"/>
</dbReference>
<dbReference type="GO" id="GO:0006508">
    <property type="term" value="P:proteolysis"/>
    <property type="evidence" value="ECO:0007669"/>
    <property type="project" value="InterPro"/>
</dbReference>
<dbReference type="GO" id="GO:0009432">
    <property type="term" value="P:SOS response"/>
    <property type="evidence" value="ECO:0007669"/>
    <property type="project" value="UniProtKB-UniRule"/>
</dbReference>
<dbReference type="CDD" id="cd06529">
    <property type="entry name" value="S24_LexA-like"/>
    <property type="match status" value="1"/>
</dbReference>
<dbReference type="FunFam" id="1.10.10.10:FF:000102">
    <property type="entry name" value="LexA repressor"/>
    <property type="match status" value="1"/>
</dbReference>
<dbReference type="FunFam" id="2.10.109.10:FF:000001">
    <property type="entry name" value="LexA repressor"/>
    <property type="match status" value="1"/>
</dbReference>
<dbReference type="Gene3D" id="2.10.109.10">
    <property type="entry name" value="Umud Fragment, subunit A"/>
    <property type="match status" value="1"/>
</dbReference>
<dbReference type="Gene3D" id="1.10.10.10">
    <property type="entry name" value="Winged helix-like DNA-binding domain superfamily/Winged helix DNA-binding domain"/>
    <property type="match status" value="1"/>
</dbReference>
<dbReference type="HAMAP" id="MF_00015">
    <property type="entry name" value="LexA"/>
    <property type="match status" value="1"/>
</dbReference>
<dbReference type="InterPro" id="IPR006200">
    <property type="entry name" value="LexA"/>
</dbReference>
<dbReference type="InterPro" id="IPR039418">
    <property type="entry name" value="LexA-like"/>
</dbReference>
<dbReference type="InterPro" id="IPR036286">
    <property type="entry name" value="LexA/Signal_pep-like_sf"/>
</dbReference>
<dbReference type="InterPro" id="IPR006199">
    <property type="entry name" value="LexA_DNA-bd_dom"/>
</dbReference>
<dbReference type="InterPro" id="IPR050077">
    <property type="entry name" value="LexA_repressor"/>
</dbReference>
<dbReference type="InterPro" id="IPR006197">
    <property type="entry name" value="Peptidase_S24_LexA"/>
</dbReference>
<dbReference type="InterPro" id="IPR015927">
    <property type="entry name" value="Peptidase_S24_S26A/B/C"/>
</dbReference>
<dbReference type="InterPro" id="IPR036388">
    <property type="entry name" value="WH-like_DNA-bd_sf"/>
</dbReference>
<dbReference type="InterPro" id="IPR036390">
    <property type="entry name" value="WH_DNA-bd_sf"/>
</dbReference>
<dbReference type="NCBIfam" id="TIGR00498">
    <property type="entry name" value="lexA"/>
    <property type="match status" value="1"/>
</dbReference>
<dbReference type="PANTHER" id="PTHR33516">
    <property type="entry name" value="LEXA REPRESSOR"/>
    <property type="match status" value="1"/>
</dbReference>
<dbReference type="PANTHER" id="PTHR33516:SF2">
    <property type="entry name" value="LEXA REPRESSOR-RELATED"/>
    <property type="match status" value="1"/>
</dbReference>
<dbReference type="Pfam" id="PF01726">
    <property type="entry name" value="LexA_DNA_bind"/>
    <property type="match status" value="1"/>
</dbReference>
<dbReference type="Pfam" id="PF00717">
    <property type="entry name" value="Peptidase_S24"/>
    <property type="match status" value="1"/>
</dbReference>
<dbReference type="PRINTS" id="PR00726">
    <property type="entry name" value="LEXASERPTASE"/>
</dbReference>
<dbReference type="SUPFAM" id="SSF51306">
    <property type="entry name" value="LexA/Signal peptidase"/>
    <property type="match status" value="1"/>
</dbReference>
<dbReference type="SUPFAM" id="SSF46785">
    <property type="entry name" value="Winged helix' DNA-binding domain"/>
    <property type="match status" value="1"/>
</dbReference>
<accession>Q11HT8</accession>